<comment type="function">
    <text evidence="1">Catalyzes the conversion of dethiobiotin (DTB) to biotin by the insertion of a sulfur atom into dethiobiotin via a radical-based mechanism.</text>
</comment>
<comment type="catalytic activity">
    <reaction evidence="1">
        <text>(4R,5S)-dethiobiotin + (sulfur carrier)-SH + 2 reduced [2Fe-2S]-[ferredoxin] + 2 S-adenosyl-L-methionine = (sulfur carrier)-H + biotin + 2 5'-deoxyadenosine + 2 L-methionine + 2 oxidized [2Fe-2S]-[ferredoxin]</text>
        <dbReference type="Rhea" id="RHEA:22060"/>
        <dbReference type="Rhea" id="RHEA-COMP:10000"/>
        <dbReference type="Rhea" id="RHEA-COMP:10001"/>
        <dbReference type="Rhea" id="RHEA-COMP:14737"/>
        <dbReference type="Rhea" id="RHEA-COMP:14739"/>
        <dbReference type="ChEBI" id="CHEBI:17319"/>
        <dbReference type="ChEBI" id="CHEBI:29917"/>
        <dbReference type="ChEBI" id="CHEBI:33737"/>
        <dbReference type="ChEBI" id="CHEBI:33738"/>
        <dbReference type="ChEBI" id="CHEBI:57586"/>
        <dbReference type="ChEBI" id="CHEBI:57844"/>
        <dbReference type="ChEBI" id="CHEBI:59789"/>
        <dbReference type="ChEBI" id="CHEBI:64428"/>
        <dbReference type="ChEBI" id="CHEBI:149473"/>
        <dbReference type="EC" id="2.8.1.6"/>
    </reaction>
</comment>
<comment type="cofactor">
    <cofactor evidence="1">
        <name>[4Fe-4S] cluster</name>
        <dbReference type="ChEBI" id="CHEBI:49883"/>
    </cofactor>
    <text evidence="1">Binds 1 [4Fe-4S] cluster. The cluster is coordinated with 3 cysteines and an exchangeable S-adenosyl-L-methionine.</text>
</comment>
<comment type="cofactor">
    <cofactor evidence="1">
        <name>[2Fe-2S] cluster</name>
        <dbReference type="ChEBI" id="CHEBI:190135"/>
    </cofactor>
    <text evidence="1">Binds 1 [2Fe-2S] cluster. The cluster is coordinated with 3 cysteines and 1 arginine.</text>
</comment>
<comment type="pathway">
    <text evidence="1">Cofactor biosynthesis; biotin biosynthesis; biotin from 7,8-diaminononanoate: step 2/2.</text>
</comment>
<comment type="subunit">
    <text evidence="1">Homodimer.</text>
</comment>
<comment type="similarity">
    <text evidence="1">Belongs to the radical SAM superfamily. Biotin synthase family.</text>
</comment>
<dbReference type="EC" id="2.8.1.6" evidence="1"/>
<dbReference type="EMBL" id="AE016795">
    <property type="protein sequence ID" value="AAO11274.2"/>
    <property type="molecule type" value="Genomic_DNA"/>
</dbReference>
<dbReference type="RefSeq" id="WP_011080761.1">
    <property type="nucleotide sequence ID" value="NC_004459.3"/>
</dbReference>
<dbReference type="SMR" id="Q8D8M9"/>
<dbReference type="KEGG" id="vvu:VV1_2943"/>
<dbReference type="HOGENOM" id="CLU_033172_1_2_6"/>
<dbReference type="UniPathway" id="UPA00078">
    <property type="reaction ID" value="UER00162"/>
</dbReference>
<dbReference type="Proteomes" id="UP000002275">
    <property type="component" value="Chromosome 1"/>
</dbReference>
<dbReference type="GO" id="GO:0051537">
    <property type="term" value="F:2 iron, 2 sulfur cluster binding"/>
    <property type="evidence" value="ECO:0007669"/>
    <property type="project" value="UniProtKB-KW"/>
</dbReference>
<dbReference type="GO" id="GO:0051539">
    <property type="term" value="F:4 iron, 4 sulfur cluster binding"/>
    <property type="evidence" value="ECO:0007669"/>
    <property type="project" value="UniProtKB-KW"/>
</dbReference>
<dbReference type="GO" id="GO:0004076">
    <property type="term" value="F:biotin synthase activity"/>
    <property type="evidence" value="ECO:0007669"/>
    <property type="project" value="UniProtKB-UniRule"/>
</dbReference>
<dbReference type="GO" id="GO:0005506">
    <property type="term" value="F:iron ion binding"/>
    <property type="evidence" value="ECO:0007669"/>
    <property type="project" value="UniProtKB-UniRule"/>
</dbReference>
<dbReference type="GO" id="GO:0009102">
    <property type="term" value="P:biotin biosynthetic process"/>
    <property type="evidence" value="ECO:0007669"/>
    <property type="project" value="UniProtKB-UniRule"/>
</dbReference>
<dbReference type="CDD" id="cd01335">
    <property type="entry name" value="Radical_SAM"/>
    <property type="match status" value="1"/>
</dbReference>
<dbReference type="FunFam" id="3.20.20.70:FF:000011">
    <property type="entry name" value="Biotin synthase"/>
    <property type="match status" value="1"/>
</dbReference>
<dbReference type="Gene3D" id="3.20.20.70">
    <property type="entry name" value="Aldolase class I"/>
    <property type="match status" value="1"/>
</dbReference>
<dbReference type="HAMAP" id="MF_01694">
    <property type="entry name" value="BioB"/>
    <property type="match status" value="1"/>
</dbReference>
<dbReference type="InterPro" id="IPR013785">
    <property type="entry name" value="Aldolase_TIM"/>
</dbReference>
<dbReference type="InterPro" id="IPR010722">
    <property type="entry name" value="BATS_dom"/>
</dbReference>
<dbReference type="InterPro" id="IPR002684">
    <property type="entry name" value="Biotin_synth/BioAB"/>
</dbReference>
<dbReference type="InterPro" id="IPR024177">
    <property type="entry name" value="Biotin_synthase"/>
</dbReference>
<dbReference type="InterPro" id="IPR006638">
    <property type="entry name" value="Elp3/MiaA/NifB-like_rSAM"/>
</dbReference>
<dbReference type="InterPro" id="IPR007197">
    <property type="entry name" value="rSAM"/>
</dbReference>
<dbReference type="NCBIfam" id="TIGR00433">
    <property type="entry name" value="bioB"/>
    <property type="match status" value="1"/>
</dbReference>
<dbReference type="PANTHER" id="PTHR22976">
    <property type="entry name" value="BIOTIN SYNTHASE"/>
    <property type="match status" value="1"/>
</dbReference>
<dbReference type="PANTHER" id="PTHR22976:SF2">
    <property type="entry name" value="BIOTIN SYNTHASE, MITOCHONDRIAL"/>
    <property type="match status" value="1"/>
</dbReference>
<dbReference type="Pfam" id="PF06968">
    <property type="entry name" value="BATS"/>
    <property type="match status" value="1"/>
</dbReference>
<dbReference type="Pfam" id="PF04055">
    <property type="entry name" value="Radical_SAM"/>
    <property type="match status" value="1"/>
</dbReference>
<dbReference type="PIRSF" id="PIRSF001619">
    <property type="entry name" value="Biotin_synth"/>
    <property type="match status" value="1"/>
</dbReference>
<dbReference type="SFLD" id="SFLDF00272">
    <property type="entry name" value="biotin_synthase"/>
    <property type="match status" value="1"/>
</dbReference>
<dbReference type="SFLD" id="SFLDS00029">
    <property type="entry name" value="Radical_SAM"/>
    <property type="match status" value="1"/>
</dbReference>
<dbReference type="SMART" id="SM00876">
    <property type="entry name" value="BATS"/>
    <property type="match status" value="1"/>
</dbReference>
<dbReference type="SMART" id="SM00729">
    <property type="entry name" value="Elp3"/>
    <property type="match status" value="1"/>
</dbReference>
<dbReference type="SUPFAM" id="SSF102114">
    <property type="entry name" value="Radical SAM enzymes"/>
    <property type="match status" value="1"/>
</dbReference>
<dbReference type="PROSITE" id="PS51918">
    <property type="entry name" value="RADICAL_SAM"/>
    <property type="match status" value="1"/>
</dbReference>
<accession>Q8D8M9</accession>
<feature type="chain" id="PRO_0000381702" description="Biotin synthase">
    <location>
        <begin position="1"/>
        <end position="350"/>
    </location>
</feature>
<feature type="domain" description="Radical SAM core" evidence="2">
    <location>
        <begin position="38"/>
        <end position="256"/>
    </location>
</feature>
<feature type="binding site" evidence="1">
    <location>
        <position position="53"/>
    </location>
    <ligand>
        <name>[4Fe-4S] cluster</name>
        <dbReference type="ChEBI" id="CHEBI:49883"/>
        <note>4Fe-4S-S-AdoMet</note>
    </ligand>
</feature>
<feature type="binding site" evidence="1">
    <location>
        <position position="57"/>
    </location>
    <ligand>
        <name>[4Fe-4S] cluster</name>
        <dbReference type="ChEBI" id="CHEBI:49883"/>
        <note>4Fe-4S-S-AdoMet</note>
    </ligand>
</feature>
<feature type="binding site" evidence="1">
    <location>
        <position position="60"/>
    </location>
    <ligand>
        <name>[4Fe-4S] cluster</name>
        <dbReference type="ChEBI" id="CHEBI:49883"/>
        <note>4Fe-4S-S-AdoMet</note>
    </ligand>
</feature>
<feature type="binding site" evidence="1">
    <location>
        <position position="97"/>
    </location>
    <ligand>
        <name>[2Fe-2S] cluster</name>
        <dbReference type="ChEBI" id="CHEBI:190135"/>
    </ligand>
</feature>
<feature type="binding site" evidence="1">
    <location>
        <position position="128"/>
    </location>
    <ligand>
        <name>[2Fe-2S] cluster</name>
        <dbReference type="ChEBI" id="CHEBI:190135"/>
    </ligand>
</feature>
<feature type="binding site" evidence="1">
    <location>
        <position position="188"/>
    </location>
    <ligand>
        <name>[2Fe-2S] cluster</name>
        <dbReference type="ChEBI" id="CHEBI:190135"/>
    </ligand>
</feature>
<feature type="binding site" evidence="1">
    <location>
        <position position="260"/>
    </location>
    <ligand>
        <name>[2Fe-2S] cluster</name>
        <dbReference type="ChEBI" id="CHEBI:190135"/>
    </ligand>
</feature>
<sequence>MEVRHNWTHAQVRELMEMPFMDLLFEAQQVHRQYHPKNYVQVSTLLSIKTGACPEDCKYCPQSARYQTDVEKERLMEVERVLDAAQKAKNAGSTRFCMGAAWKNPKERDMPLLTDMIKGVKDMGLETCMTLGMLTPEQAKQLASAGLDYYNHNLDTSPEYYGNIITTRTYQDRLDTLSHVRDAGMKICSGGIIGMGESANDRAGLLVELANLPTHPESVPINMLVKVKGTPLETAEEVDPFDFIRLIAVARIMMPTSAVRLSAGRENMNEQMQTLCFMAGANSIFYGCKLLTTPNPSEDKDMQLFNKLGINSQQVSQKPDEITENELLDRVVESVAARPTKDDLFYDASL</sequence>
<organism>
    <name type="scientific">Vibrio vulnificus (strain CMCP6)</name>
    <dbReference type="NCBI Taxonomy" id="216895"/>
    <lineage>
        <taxon>Bacteria</taxon>
        <taxon>Pseudomonadati</taxon>
        <taxon>Pseudomonadota</taxon>
        <taxon>Gammaproteobacteria</taxon>
        <taxon>Vibrionales</taxon>
        <taxon>Vibrionaceae</taxon>
        <taxon>Vibrio</taxon>
    </lineage>
</organism>
<proteinExistence type="inferred from homology"/>
<reference key="1">
    <citation type="submission" date="2002-12" db="EMBL/GenBank/DDBJ databases">
        <title>Complete genome sequence of Vibrio vulnificus CMCP6.</title>
        <authorList>
            <person name="Rhee J.H."/>
            <person name="Kim S.Y."/>
            <person name="Chung S.S."/>
            <person name="Kim J.J."/>
            <person name="Moon Y.H."/>
            <person name="Jeong H."/>
            <person name="Choy H.E."/>
        </authorList>
    </citation>
    <scope>NUCLEOTIDE SEQUENCE [LARGE SCALE GENOMIC DNA]</scope>
    <source>
        <strain>CMCP6</strain>
    </source>
</reference>
<reference key="2">
    <citation type="journal article" date="2011" name="Mol. Syst. Biol.">
        <title>Integrative genome-scale metabolic analysis of Vibrio vulnificus for drug targeting and discovery.</title>
        <authorList>
            <person name="Kim H.U."/>
            <person name="Kim S.Y."/>
            <person name="Jeong H."/>
            <person name="Kim T.Y."/>
            <person name="Kim J.J."/>
            <person name="Choy H.E."/>
            <person name="Yi K.Y."/>
            <person name="Rhee J.H."/>
            <person name="Lee S.Y."/>
        </authorList>
    </citation>
    <scope>SEQUENCE REVISION TO 77</scope>
    <source>
        <strain>CMCP6</strain>
    </source>
</reference>
<keyword id="KW-0001">2Fe-2S</keyword>
<keyword id="KW-0004">4Fe-4S</keyword>
<keyword id="KW-0093">Biotin biosynthesis</keyword>
<keyword id="KW-0408">Iron</keyword>
<keyword id="KW-0411">Iron-sulfur</keyword>
<keyword id="KW-0479">Metal-binding</keyword>
<keyword id="KW-0949">S-adenosyl-L-methionine</keyword>
<keyword id="KW-0808">Transferase</keyword>
<gene>
    <name evidence="1" type="primary">bioB</name>
    <name type="ordered locus">VV1_2943</name>
</gene>
<evidence type="ECO:0000255" key="1">
    <source>
        <dbReference type="HAMAP-Rule" id="MF_01694"/>
    </source>
</evidence>
<evidence type="ECO:0000255" key="2">
    <source>
        <dbReference type="PROSITE-ProRule" id="PRU01266"/>
    </source>
</evidence>
<protein>
    <recommendedName>
        <fullName evidence="1">Biotin synthase</fullName>
        <ecNumber evidence="1">2.8.1.6</ecNumber>
    </recommendedName>
</protein>
<name>BIOB_VIBVU</name>